<dbReference type="EMBL" id="X17403">
    <property type="protein sequence ID" value="CAA35388.1"/>
    <property type="molecule type" value="Genomic_DNA"/>
</dbReference>
<dbReference type="EMBL" id="BK000394">
    <property type="protein sequence ID" value="DAA00169.1"/>
    <property type="molecule type" value="Genomic_DNA"/>
</dbReference>
<dbReference type="PIR" id="S09836">
    <property type="entry name" value="QQBEB2"/>
</dbReference>
<dbReference type="SMR" id="P16795"/>
<dbReference type="Proteomes" id="UP000008991">
    <property type="component" value="Segment"/>
</dbReference>
<dbReference type="Proteomes" id="UP000008992">
    <property type="component" value="Segment"/>
</dbReference>
<dbReference type="GO" id="GO:0044177">
    <property type="term" value="C:host cell Golgi apparatus"/>
    <property type="evidence" value="ECO:0007669"/>
    <property type="project" value="UniProtKB-SubCell"/>
</dbReference>
<dbReference type="GO" id="GO:0033644">
    <property type="term" value="C:host cell membrane"/>
    <property type="evidence" value="ECO:0007669"/>
    <property type="project" value="UniProtKB-SubCell"/>
</dbReference>
<dbReference type="GO" id="GO:0016020">
    <property type="term" value="C:membrane"/>
    <property type="evidence" value="ECO:0007669"/>
    <property type="project" value="UniProtKB-KW"/>
</dbReference>
<dbReference type="GO" id="GO:0019031">
    <property type="term" value="C:viral envelope"/>
    <property type="evidence" value="ECO:0007669"/>
    <property type="project" value="UniProtKB-KW"/>
</dbReference>
<dbReference type="GO" id="GO:0055036">
    <property type="term" value="C:virion membrane"/>
    <property type="evidence" value="ECO:0007669"/>
    <property type="project" value="UniProtKB-SubCell"/>
</dbReference>
<dbReference type="HAMAP" id="MF_04037">
    <property type="entry name" value="HSV_GN"/>
    <property type="match status" value="1"/>
</dbReference>
<dbReference type="InterPro" id="IPR021003">
    <property type="entry name" value="Cytomegalovirus_glycopN_N"/>
</dbReference>
<dbReference type="InterPro" id="IPR005211">
    <property type="entry name" value="Herpes_glycoprotein_N_domain"/>
</dbReference>
<dbReference type="InterPro" id="IPR034707">
    <property type="entry name" value="HSV_GN"/>
</dbReference>
<dbReference type="Pfam" id="PF03554">
    <property type="entry name" value="Herpes_UL73"/>
    <property type="match status" value="1"/>
</dbReference>
<dbReference type="Pfam" id="PF12522">
    <property type="entry name" value="UL73_N"/>
    <property type="match status" value="1"/>
</dbReference>
<keyword id="KW-1015">Disulfide bond</keyword>
<keyword id="KW-1040">Host Golgi apparatus</keyword>
<keyword id="KW-1043">Host membrane</keyword>
<keyword id="KW-0472">Membrane</keyword>
<keyword id="KW-1185">Reference proteome</keyword>
<keyword id="KW-0732">Signal</keyword>
<keyword id="KW-0812">Transmembrane</keyword>
<keyword id="KW-1133">Transmembrane helix</keyword>
<keyword id="KW-0261">Viral envelope protein</keyword>
<keyword id="KW-0946">Virion</keyword>
<reference key="1">
    <citation type="journal article" date="1990" name="Curr. Top. Microbiol. Immunol.">
        <title>Analysis of the protein-coding content of the sequence of human cytomegalovirus strain AD169.</title>
        <authorList>
            <person name="Chee M.S."/>
            <person name="Bankier A.T."/>
            <person name="Beck S."/>
            <person name="Bohni R."/>
            <person name="Brown C.M."/>
            <person name="Cerny R."/>
            <person name="Horsnell T."/>
            <person name="Hutchison C.A. III"/>
            <person name="Kouzarides T."/>
            <person name="Martignetti J.A."/>
            <person name="Preddie E."/>
            <person name="Satchwell S.C."/>
            <person name="Tomlinson P."/>
            <person name="Weston K.M."/>
            <person name="Barrell B.G."/>
        </authorList>
    </citation>
    <scope>NUCLEOTIDE SEQUENCE [LARGE SCALE GENOMIC DNA]</scope>
</reference>
<reference key="2">
    <citation type="journal article" date="2003" name="J. Gen. Virol.">
        <title>The human cytomegalovirus genome revisited: comparison with the chimpanzee cytomegalovirus genome.</title>
        <authorList>
            <person name="Davison A.J."/>
            <person name="Dolan A."/>
            <person name="Akter P."/>
            <person name="Addison C."/>
            <person name="Dargan D.J."/>
            <person name="Alcendor D.J."/>
            <person name="McGeoch D.J."/>
            <person name="Hayward G.S."/>
        </authorList>
    </citation>
    <scope>GENOME REANNOTATION</scope>
</reference>
<reference key="3">
    <citation type="journal article" date="2003" name="J. Gen. Virol.">
        <authorList>
            <person name="Davison A.J."/>
            <person name="Dolan A."/>
            <person name="Akter P."/>
            <person name="Addison C."/>
            <person name="Dargan D.J."/>
            <person name="Alcendor D.J."/>
            <person name="McGeoch D.J."/>
            <person name="Hayward G.S."/>
        </authorList>
    </citation>
    <scope>ERRATUM OF PUBMED:12533697</scope>
</reference>
<reference key="4">
    <citation type="journal article" date="2004" name="J. Virol.">
        <title>Identification of proteins in human cytomegalovirus (HCMV) particles: the HCMV proteome.</title>
        <authorList>
            <person name="Varnum S.M."/>
            <person name="Streblow D.N."/>
            <person name="Monroe M.E."/>
            <person name="Smith P."/>
            <person name="Auberry K.J."/>
            <person name="Pasa-Tolic L."/>
            <person name="Wang D."/>
            <person name="Camp D.G. II"/>
            <person name="Rodland K."/>
            <person name="Wiley S."/>
            <person name="Britt W."/>
            <person name="Shenk T."/>
            <person name="Smith R.D."/>
            <person name="Nelson J.A."/>
        </authorList>
    </citation>
    <scope>IDENTIFICATION</scope>
</reference>
<reference key="5">
    <citation type="journal article" date="2004" name="J. Virol.">
        <authorList>
            <person name="Varnum S.M."/>
            <person name="Streblow D.N."/>
            <person name="Monroe M.E."/>
            <person name="Smith P."/>
            <person name="Auberry K.J."/>
            <person name="Pasa-Tolic L."/>
            <person name="Wang D."/>
            <person name="Camp D.G. II"/>
            <person name="Rodland K."/>
            <person name="Wiley S."/>
            <person name="Britt W."/>
            <person name="Shenk T."/>
            <person name="Smith R.D."/>
            <person name="Nelson J.A."/>
        </authorList>
    </citation>
    <scope>ERRATUM OF PUBMED:15452216</scope>
</reference>
<reference key="6">
    <citation type="journal article" date="2000" name="J. Virol.">
        <title>Complex formation by human cytomegalovirus glycoproteins M (gpUL100) and N (gpUL73).</title>
        <authorList>
            <person name="Mach M."/>
            <person name="Kropff B."/>
            <person name="Dal Monte P."/>
            <person name="Britt W."/>
        </authorList>
    </citation>
    <scope>SUBUNIT</scope>
    <scope>SUBCELLULAR LOCATION</scope>
    <scope>GLYCOSYLATION</scope>
    <scope>DISULFIDE BOND</scope>
</reference>
<reference key="7">
    <citation type="journal article" date="2002" name="Arch. Virol.">
        <title>Immunoelectron microscopy analysis of HCMV gpUL73 (gN) localization.</title>
        <authorList>
            <person name="Pignatelli S."/>
            <person name="Dal Monte P."/>
            <person name="Zini N."/>
            <person name="Valmori A."/>
            <person name="Maraldi N.M."/>
            <person name="Landini M.P."/>
        </authorList>
    </citation>
    <scope>SUBCELLULAR LOCATION</scope>
</reference>
<reference key="8">
    <citation type="journal article" date="2005" name="J. Virol.">
        <title>Complex formation by glycoproteins M and N of human cytomegalovirus: structural and functional aspects.</title>
        <authorList>
            <person name="Mach M."/>
            <person name="Kropff B."/>
            <person name="Kryzaniak M."/>
            <person name="Britt W."/>
        </authorList>
    </citation>
    <scope>SUBUNIT</scope>
    <scope>DISULFIDE BOND</scope>
</reference>
<reference key="9">
    <citation type="journal article" date="2007" name="J. Virol.">
        <title>The carboxy-terminal domain of glycoprotein N of human cytomegalovirus is required for virion morphogenesis.</title>
        <authorList>
            <person name="Mach M."/>
            <person name="Osinski K."/>
            <person name="Kropff B."/>
            <person name="Schloetzer-Schrehardt U."/>
            <person name="Krzyzaniak M."/>
            <person name="Britt W."/>
        </authorList>
    </citation>
    <scope>FUNCTION</scope>
</reference>
<accession>P16795</accession>
<accession>Q7M6L9</accession>
<sequence>MEWNTLVLGLLVLSVVAESSGNNSSTSTSATTSKSSASVSTTKLTTVATTSATTTTTTTLSTTSTKLSSTTHDPNVMRRHANDDFYKAHCTSHMYELSLSSFAAWWTMLNALILMGAFCIVLRHCCFQNFTATTTKGY</sequence>
<proteinExistence type="evidence at protein level"/>
<feature type="signal peptide" evidence="1">
    <location>
        <begin position="1"/>
        <end position="21"/>
    </location>
</feature>
<feature type="chain" id="PRO_0000116220" description="Envelope glycoprotein N" evidence="1">
    <location>
        <begin position="22"/>
        <end position="138"/>
    </location>
</feature>
<feature type="topological domain" description="Virion surface" evidence="1">
    <location>
        <begin position="22"/>
        <end position="101"/>
    </location>
</feature>
<feature type="transmembrane region" description="Helical" evidence="1">
    <location>
        <begin position="102"/>
        <end position="122"/>
    </location>
</feature>
<feature type="topological domain" description="Intravirion" evidence="1">
    <location>
        <begin position="123"/>
        <end position="138"/>
    </location>
</feature>
<feature type="disulfide bond" description="Interchain (with gM)" evidence="1 2 4">
    <location>
        <position position="90"/>
    </location>
</feature>
<protein>
    <recommendedName>
        <fullName evidence="1">Envelope glycoprotein N</fullName>
    </recommendedName>
</protein>
<organism>
    <name type="scientific">Human cytomegalovirus (strain AD169)</name>
    <name type="common">HHV-5</name>
    <name type="synonym">Human herpesvirus 5</name>
    <dbReference type="NCBI Taxonomy" id="10360"/>
    <lineage>
        <taxon>Viruses</taxon>
        <taxon>Duplodnaviria</taxon>
        <taxon>Heunggongvirae</taxon>
        <taxon>Peploviricota</taxon>
        <taxon>Herviviricetes</taxon>
        <taxon>Herpesvirales</taxon>
        <taxon>Orthoherpesviridae</taxon>
        <taxon>Betaherpesvirinae</taxon>
        <taxon>Cytomegalovirus</taxon>
        <taxon>Cytomegalovirus humanbeta5</taxon>
        <taxon>Human cytomegalovirus</taxon>
    </lineage>
</organism>
<evidence type="ECO:0000255" key="1">
    <source>
        <dbReference type="HAMAP-Rule" id="MF_04037"/>
    </source>
</evidence>
<evidence type="ECO:0000269" key="2">
    <source>
    </source>
</evidence>
<evidence type="ECO:0000269" key="3">
    <source>
    </source>
</evidence>
<evidence type="ECO:0000269" key="4">
    <source>
    </source>
</evidence>
<evidence type="ECO:0000269" key="5">
    <source>
    </source>
</evidence>
<gene>
    <name evidence="1" type="primary">gN</name>
    <name type="ORF">UL73</name>
</gene>
<comment type="function">
    <text evidence="1 5">Envelope glycoprotein necessary for proper maturation of gM and modulation of its membrane fusion activity. Also plays a critical role in virion morphogenesis.</text>
</comment>
<comment type="subunit">
    <text evidence="1 2 4">Interacts (via N-terminus) with gM (via N-terminus). The gM-gN heterodimer forms the gCII complex.</text>
</comment>
<comment type="subcellular location">
    <subcellularLocation>
        <location evidence="1 3">Virion membrane</location>
        <topology evidence="1">Single-pass type I membrane protein</topology>
    </subcellularLocation>
    <subcellularLocation>
        <location evidence="1 3">Host membrane</location>
        <topology evidence="1">Single-pass type I membrane protein</topology>
    </subcellularLocation>
    <subcellularLocation>
        <location evidence="1">Host Golgi apparatus</location>
        <location evidence="1">Host trans-Golgi network</location>
    </subcellularLocation>
    <text evidence="1">When coexpressed with gM, localizes in the host trans-Golgi network.</text>
</comment>
<comment type="PTM">
    <text evidence="2">O-glycosylated.</text>
</comment>
<comment type="similarity">
    <text evidence="1">Belongs to the herpesviridae glycoprotein N family.</text>
</comment>
<organismHost>
    <name type="scientific">Homo sapiens</name>
    <name type="common">Human</name>
    <dbReference type="NCBI Taxonomy" id="9606"/>
</organismHost>
<name>GN_HCMVA</name>